<gene>
    <name type="primary">mrcB</name>
    <name type="synonym">ponB</name>
    <name type="ordered locus">VC_0602</name>
</gene>
<feature type="chain" id="PRO_0000083187" description="Penicillin-binding protein 1B">
    <location>
        <begin position="1"/>
        <end position="777"/>
    </location>
</feature>
<feature type="topological domain" description="Cytoplasmic" evidence="3">
    <location>
        <begin position="1"/>
        <end position="30"/>
    </location>
</feature>
<feature type="transmembrane region" description="Helical; Signal-anchor for type II membrane protein" evidence="3">
    <location>
        <begin position="31"/>
        <end position="52"/>
    </location>
</feature>
<feature type="topological domain" description="Periplasmic" evidence="3">
    <location>
        <begin position="53"/>
        <end position="777"/>
    </location>
</feature>
<feature type="region of interest" description="Transglycosylase">
    <location>
        <begin position="162"/>
        <end position="334"/>
    </location>
</feature>
<feature type="region of interest" description="Transpeptidase">
    <location>
        <begin position="415"/>
        <end position="709"/>
    </location>
</feature>
<feature type="active site" description="Proton donor; for transglycosylase activity" evidence="2">
    <location>
        <position position="200"/>
    </location>
</feature>
<feature type="active site" description="Acyl-ester intermediate; for transpeptidase activity" evidence="2">
    <location>
        <position position="476"/>
    </location>
</feature>
<keyword id="KW-0046">Antibiotic resistance</keyword>
<keyword id="KW-0121">Carboxypeptidase</keyword>
<keyword id="KW-0997">Cell inner membrane</keyword>
<keyword id="KW-1003">Cell membrane</keyword>
<keyword id="KW-0133">Cell shape</keyword>
<keyword id="KW-0961">Cell wall biogenesis/degradation</keyword>
<keyword id="KW-0328">Glycosyltransferase</keyword>
<keyword id="KW-0378">Hydrolase</keyword>
<keyword id="KW-0472">Membrane</keyword>
<keyword id="KW-0511">Multifunctional enzyme</keyword>
<keyword id="KW-0573">Peptidoglycan synthesis</keyword>
<keyword id="KW-0645">Protease</keyword>
<keyword id="KW-1185">Reference proteome</keyword>
<keyword id="KW-0735">Signal-anchor</keyword>
<keyword id="KW-0808">Transferase</keyword>
<keyword id="KW-0812">Transmembrane</keyword>
<keyword id="KW-1133">Transmembrane helix</keyword>
<comment type="function">
    <text evidence="1">Cell wall formation. Synthesis of cross-linked peptidoglycan from the lipid intermediates. The enzyme has a penicillin-insensitive transglycosylase N-terminal domain (formation of linear glycan strands) and a penicillin-sensitive transpeptidase C-terminal domain (cross-linking of the peptide subunits) (By similarity).</text>
</comment>
<comment type="catalytic activity">
    <reaction evidence="2">
        <text>[GlcNAc-(1-&gt;4)-Mur2Ac(oyl-L-Ala-gamma-D-Glu-L-Lys-D-Ala-D-Ala)](n)-di-trans,octa-cis-undecaprenyl diphosphate + beta-D-GlcNAc-(1-&gt;4)-Mur2Ac(oyl-L-Ala-gamma-D-Glu-L-Lys-D-Ala-D-Ala)-di-trans,octa-cis-undecaprenyl diphosphate = [GlcNAc-(1-&gt;4)-Mur2Ac(oyl-L-Ala-gamma-D-Glu-L-Lys-D-Ala-D-Ala)](n+1)-di-trans,octa-cis-undecaprenyl diphosphate + di-trans,octa-cis-undecaprenyl diphosphate + H(+)</text>
        <dbReference type="Rhea" id="RHEA:23708"/>
        <dbReference type="Rhea" id="RHEA-COMP:9602"/>
        <dbReference type="Rhea" id="RHEA-COMP:9603"/>
        <dbReference type="ChEBI" id="CHEBI:15378"/>
        <dbReference type="ChEBI" id="CHEBI:58405"/>
        <dbReference type="ChEBI" id="CHEBI:60033"/>
        <dbReference type="ChEBI" id="CHEBI:78435"/>
        <dbReference type="EC" id="2.4.99.28"/>
    </reaction>
</comment>
<comment type="catalytic activity">
    <reaction evidence="2">
        <text>Preferential cleavage: (Ac)2-L-Lys-D-Ala-|-D-Ala. Also transpeptidation of peptidyl-alanyl moieties that are N-acyl substituents of D-alanine.</text>
        <dbReference type="EC" id="3.4.16.4"/>
    </reaction>
</comment>
<comment type="pathway">
    <text>Cell wall biogenesis; peptidoglycan biosynthesis.</text>
</comment>
<comment type="subcellular location">
    <subcellularLocation>
        <location evidence="1">Cell inner membrane</location>
        <topology evidence="1">Single-pass type II membrane protein</topology>
    </subcellularLocation>
</comment>
<comment type="similarity">
    <text evidence="4">In the N-terminal section; belongs to the glycosyltransferase 51 family.</text>
</comment>
<comment type="similarity">
    <text evidence="4">In the C-terminal section; belongs to the transpeptidase family.</text>
</comment>
<accession>Q9KUC0</accession>
<dbReference type="EC" id="2.4.99.28" evidence="2"/>
<dbReference type="EC" id="3.4.16.4" evidence="2"/>
<dbReference type="EMBL" id="AE003852">
    <property type="protein sequence ID" value="AAF93769.1"/>
    <property type="molecule type" value="Genomic_DNA"/>
</dbReference>
<dbReference type="PIR" id="A82303">
    <property type="entry name" value="A82303"/>
</dbReference>
<dbReference type="RefSeq" id="NP_230252.1">
    <property type="nucleotide sequence ID" value="NC_002505.1"/>
</dbReference>
<dbReference type="RefSeq" id="WP_000197283.1">
    <property type="nucleotide sequence ID" value="NZ_LT906614.1"/>
</dbReference>
<dbReference type="SMR" id="Q9KUC0"/>
<dbReference type="STRING" id="243277.VC_0602"/>
<dbReference type="CAZy" id="GT51">
    <property type="family name" value="Glycosyltransferase Family 51"/>
</dbReference>
<dbReference type="DNASU" id="2615390"/>
<dbReference type="EnsemblBacteria" id="AAF93769">
    <property type="protein sequence ID" value="AAF93769"/>
    <property type="gene ID" value="VC_0602"/>
</dbReference>
<dbReference type="KEGG" id="vch:VC_0602"/>
<dbReference type="PATRIC" id="fig|243277.26.peg.572"/>
<dbReference type="eggNOG" id="COG0744">
    <property type="taxonomic scope" value="Bacteria"/>
</dbReference>
<dbReference type="HOGENOM" id="CLU_006354_2_7_6"/>
<dbReference type="UniPathway" id="UPA00219"/>
<dbReference type="Proteomes" id="UP000000584">
    <property type="component" value="Chromosome 1"/>
</dbReference>
<dbReference type="GO" id="GO:0030288">
    <property type="term" value="C:outer membrane-bounded periplasmic space"/>
    <property type="evidence" value="ECO:0000318"/>
    <property type="project" value="GO_Central"/>
</dbReference>
<dbReference type="GO" id="GO:0009274">
    <property type="term" value="C:peptidoglycan-based cell wall"/>
    <property type="evidence" value="ECO:0007669"/>
    <property type="project" value="InterPro"/>
</dbReference>
<dbReference type="GO" id="GO:0005886">
    <property type="term" value="C:plasma membrane"/>
    <property type="evidence" value="ECO:0007669"/>
    <property type="project" value="UniProtKB-SubCell"/>
</dbReference>
<dbReference type="GO" id="GO:0008658">
    <property type="term" value="F:penicillin binding"/>
    <property type="evidence" value="ECO:0007669"/>
    <property type="project" value="InterPro"/>
</dbReference>
<dbReference type="GO" id="GO:0008955">
    <property type="term" value="F:peptidoglycan glycosyltransferase activity"/>
    <property type="evidence" value="ECO:0000318"/>
    <property type="project" value="GO_Central"/>
</dbReference>
<dbReference type="GO" id="GO:0009002">
    <property type="term" value="F:serine-type D-Ala-D-Ala carboxypeptidase activity"/>
    <property type="evidence" value="ECO:0007669"/>
    <property type="project" value="UniProtKB-EC"/>
</dbReference>
<dbReference type="GO" id="GO:0071555">
    <property type="term" value="P:cell wall organization"/>
    <property type="evidence" value="ECO:0007669"/>
    <property type="project" value="UniProtKB-KW"/>
</dbReference>
<dbReference type="GO" id="GO:0009252">
    <property type="term" value="P:peptidoglycan biosynthetic process"/>
    <property type="evidence" value="ECO:0000318"/>
    <property type="project" value="GO_Central"/>
</dbReference>
<dbReference type="GO" id="GO:0006508">
    <property type="term" value="P:proteolysis"/>
    <property type="evidence" value="ECO:0007669"/>
    <property type="project" value="UniProtKB-KW"/>
</dbReference>
<dbReference type="GO" id="GO:0008360">
    <property type="term" value="P:regulation of cell shape"/>
    <property type="evidence" value="ECO:0007669"/>
    <property type="project" value="UniProtKB-KW"/>
</dbReference>
<dbReference type="GO" id="GO:0046677">
    <property type="term" value="P:response to antibiotic"/>
    <property type="evidence" value="ECO:0007669"/>
    <property type="project" value="UniProtKB-KW"/>
</dbReference>
<dbReference type="FunFam" id="1.10.3810.10:FF:000009">
    <property type="entry name" value="Penicillin-binding protein 1B"/>
    <property type="match status" value="1"/>
</dbReference>
<dbReference type="FunFam" id="3.30.2060.10:FF:000003">
    <property type="entry name" value="Penicillin-binding protein 1B"/>
    <property type="match status" value="1"/>
</dbReference>
<dbReference type="FunFam" id="3.40.710.10:FF:000006">
    <property type="entry name" value="Penicillin-binding protein 1B"/>
    <property type="match status" value="1"/>
</dbReference>
<dbReference type="Gene3D" id="1.10.3810.10">
    <property type="entry name" value="Biosynthetic peptidoglycan transglycosylase-like"/>
    <property type="match status" value="1"/>
</dbReference>
<dbReference type="Gene3D" id="3.40.710.10">
    <property type="entry name" value="DD-peptidase/beta-lactamase superfamily"/>
    <property type="match status" value="1"/>
</dbReference>
<dbReference type="Gene3D" id="3.30.2060.10">
    <property type="entry name" value="Penicillin-binding protein 1b domain"/>
    <property type="match status" value="1"/>
</dbReference>
<dbReference type="InterPro" id="IPR012338">
    <property type="entry name" value="Beta-lactam/transpept-like"/>
</dbReference>
<dbReference type="InterPro" id="IPR001264">
    <property type="entry name" value="Glyco_trans_51"/>
</dbReference>
<dbReference type="InterPro" id="IPR050396">
    <property type="entry name" value="Glycosyltr_51/Transpeptidase"/>
</dbReference>
<dbReference type="InterPro" id="IPR023346">
    <property type="entry name" value="Lysozyme-like_dom_sf"/>
</dbReference>
<dbReference type="InterPro" id="IPR011813">
    <property type="entry name" value="PBP_1b"/>
</dbReference>
<dbReference type="InterPro" id="IPR036950">
    <property type="entry name" value="PBP_transglycosylase"/>
</dbReference>
<dbReference type="InterPro" id="IPR001460">
    <property type="entry name" value="PCN-bd_Tpept"/>
</dbReference>
<dbReference type="InterPro" id="IPR028166">
    <property type="entry name" value="UB2H"/>
</dbReference>
<dbReference type="NCBIfam" id="TIGR02074">
    <property type="entry name" value="PBP_1a_fam"/>
    <property type="match status" value="1"/>
</dbReference>
<dbReference type="NCBIfam" id="TIGR02071">
    <property type="entry name" value="PBP_1b"/>
    <property type="match status" value="1"/>
</dbReference>
<dbReference type="PANTHER" id="PTHR32282">
    <property type="entry name" value="BINDING PROTEIN TRANSPEPTIDASE, PUTATIVE-RELATED"/>
    <property type="match status" value="1"/>
</dbReference>
<dbReference type="PANTHER" id="PTHR32282:SF11">
    <property type="entry name" value="PENICILLIN-BINDING PROTEIN 1B"/>
    <property type="match status" value="1"/>
</dbReference>
<dbReference type="Pfam" id="PF00912">
    <property type="entry name" value="Transgly"/>
    <property type="match status" value="1"/>
</dbReference>
<dbReference type="Pfam" id="PF00905">
    <property type="entry name" value="Transpeptidase"/>
    <property type="match status" value="1"/>
</dbReference>
<dbReference type="Pfam" id="PF14814">
    <property type="entry name" value="UB2H"/>
    <property type="match status" value="1"/>
</dbReference>
<dbReference type="PIRSF" id="PIRSF002799">
    <property type="entry name" value="PBP_1b"/>
    <property type="match status" value="1"/>
</dbReference>
<dbReference type="SUPFAM" id="SSF56601">
    <property type="entry name" value="beta-lactamase/transpeptidase-like"/>
    <property type="match status" value="1"/>
</dbReference>
<dbReference type="SUPFAM" id="SSF53955">
    <property type="entry name" value="Lysozyme-like"/>
    <property type="match status" value="1"/>
</dbReference>
<organism>
    <name type="scientific">Vibrio cholerae serotype O1 (strain ATCC 39315 / El Tor Inaba N16961)</name>
    <dbReference type="NCBI Taxonomy" id="243277"/>
    <lineage>
        <taxon>Bacteria</taxon>
        <taxon>Pseudomonadati</taxon>
        <taxon>Pseudomonadota</taxon>
        <taxon>Gammaproteobacteria</taxon>
        <taxon>Vibrionales</taxon>
        <taxon>Vibrionaceae</taxon>
        <taxon>Vibrio</taxon>
    </lineage>
</organism>
<name>PBPB_VIBCH</name>
<proteinExistence type="inferred from homology"/>
<evidence type="ECO:0000250" key="1"/>
<evidence type="ECO:0000250" key="2">
    <source>
        <dbReference type="UniProtKB" id="P02919"/>
    </source>
</evidence>
<evidence type="ECO:0000255" key="3"/>
<evidence type="ECO:0000305" key="4"/>
<sequence>MTRKSSNRSRGRKARSGKSASSSKLQIWLGRIWSIGWKLALTLAAVLVFIGIYLDSMIKQRFEGQLFDLPTVVYARILTLEPGNGLSLQELRNELDVLNYRKVAQPRFPGEYASSSSRIELIRRPFEFADGPEPDRRVMLTFDGSGLNKIESLEQKRELGYLRLEPKLMGMLEKDSPEQRLFLRRDQFPEVLVDALLVTEDRDFYQHDGVSPLAIGRAMVVNLKAGRTVQGGSTLTQQLAKNIFLSSDRTLWRKLREAYMALIIDYRYSKDRILEAYLNEVYLGQSGADAIHGFGLASRLYFGQPLQELRIDQLALLVGMVKGPSYYNPMRYAERARERRDLVLKLMMEHDILTAPEYQQAVTRPLDVQKTAQIASRQPAYFQQVSIELKEKLGDKFKADSGLRVFTSLDPVSQSKLEQAIHDQIPQLAKTAGKDLEAAAIAVDRHSGEIRAMVGGKRTGYDGFNRVLNASRQIGSLVKPAVYLTALAHPDQYNLATTLEDKPLTLKGSEGSAWTPRNYDRQYRGEVPLYLALAQSLNVPTVALGMKLGIDQVSATLGKLGVNRDEIRPVPSMLLGSFSLTPYQVAQMYQTLTNSGKKAPLSALRSVLDLEGNVLYESLPRVSQAVDQQAAWLTTYAMKQGVQEGTGRYLNAQFSSAALAGKTGTTNDNRDSWFVGVDGREVTTIWLGRDDNQPTKLTGASGALRVYAQYLKYRIPEKLQLPWPEGITTFGFAKQTQGGLKLDCDNAFKLPIWDNQQQLKQQCENRPTEWIKKLFEW</sequence>
<protein>
    <recommendedName>
        <fullName>Penicillin-binding protein 1B</fullName>
        <shortName>PBP-1b</shortName>
        <shortName>PBP1b</shortName>
    </recommendedName>
    <alternativeName>
        <fullName>Murein polymerase</fullName>
    </alternativeName>
    <domain>
        <recommendedName>
            <fullName>Penicillin-insensitive transglycosylase</fullName>
            <ecNumber evidence="2">2.4.99.28</ecNumber>
        </recommendedName>
        <alternativeName>
            <fullName>Peptidoglycan TGase</fullName>
        </alternativeName>
        <alternativeName>
            <fullName>Peptidoglycan glycosyltransferase</fullName>
        </alternativeName>
    </domain>
    <domain>
        <recommendedName>
            <fullName>Penicillin-sensitive transpeptidase</fullName>
            <ecNumber evidence="2">3.4.16.4</ecNumber>
        </recommendedName>
        <alternativeName>
            <fullName>DD-transpeptidase</fullName>
        </alternativeName>
    </domain>
</protein>
<reference key="1">
    <citation type="journal article" date="2000" name="Nature">
        <title>DNA sequence of both chromosomes of the cholera pathogen Vibrio cholerae.</title>
        <authorList>
            <person name="Heidelberg J.F."/>
            <person name="Eisen J.A."/>
            <person name="Nelson W.C."/>
            <person name="Clayton R.A."/>
            <person name="Gwinn M.L."/>
            <person name="Dodson R.J."/>
            <person name="Haft D.H."/>
            <person name="Hickey E.K."/>
            <person name="Peterson J.D."/>
            <person name="Umayam L.A."/>
            <person name="Gill S.R."/>
            <person name="Nelson K.E."/>
            <person name="Read T.D."/>
            <person name="Tettelin H."/>
            <person name="Richardson D.L."/>
            <person name="Ermolaeva M.D."/>
            <person name="Vamathevan J.J."/>
            <person name="Bass S."/>
            <person name="Qin H."/>
            <person name="Dragoi I."/>
            <person name="Sellers P."/>
            <person name="McDonald L.A."/>
            <person name="Utterback T.R."/>
            <person name="Fleischmann R.D."/>
            <person name="Nierman W.C."/>
            <person name="White O."/>
            <person name="Salzberg S.L."/>
            <person name="Smith H.O."/>
            <person name="Colwell R.R."/>
            <person name="Mekalanos J.J."/>
            <person name="Venter J.C."/>
            <person name="Fraser C.M."/>
        </authorList>
    </citation>
    <scope>NUCLEOTIDE SEQUENCE [LARGE SCALE GENOMIC DNA]</scope>
    <source>
        <strain>ATCC 39315 / El Tor Inaba N16961</strain>
    </source>
</reference>